<reference key="1">
    <citation type="journal article" date="2005" name="DNA Res.">
        <title>Complete nucleotide sequence of the chloroplast genome from the Tasmanian blue gum, Eucalyptus globulus (Myrtaceae).</title>
        <authorList>
            <person name="Steane D.A."/>
        </authorList>
    </citation>
    <scope>NUCLEOTIDE SEQUENCE [LARGE SCALE GENOMIC DNA]</scope>
</reference>
<sequence>MVREKVRVSTRTLQWKCVESRADSKRLYYGRFILSPLMKGQADTIGIAMRRALLGEIEGTCITRAKFEKIPHEYSTIVGIQESVHEILMNLKEIVLRSNLYGTRNASICVKGPGCVTAQDIILPTSVEIVDNTQYIANLTEPINLCIGLQIERNRGYHIKTPKNFQDGSYPIDAVFMPVRNANHSIHSYGNGNEKQEILFLEIWTNGSLTPKEALHEASRNLIDLFIPFLHAEEENLHLENNQYKVTLPFFTFHDRLAKLRKTKKEIALKSIFIDQFELPPRTYNCLKRYNIHTLFDLLNKSQEDLMKMEYFRIEDVKQILDSLEIEKAFHNPFTEE</sequence>
<dbReference type="EC" id="2.7.7.6" evidence="1"/>
<dbReference type="EMBL" id="AY780259">
    <property type="protein sequence ID" value="AAX21059.1"/>
    <property type="molecule type" value="Genomic_DNA"/>
</dbReference>
<dbReference type="RefSeq" id="YP_636331.1">
    <property type="nucleotide sequence ID" value="NC_008115.1"/>
</dbReference>
<dbReference type="SMR" id="Q49KW6"/>
<dbReference type="GeneID" id="4108415"/>
<dbReference type="GO" id="GO:0009507">
    <property type="term" value="C:chloroplast"/>
    <property type="evidence" value="ECO:0007669"/>
    <property type="project" value="UniProtKB-SubCell"/>
</dbReference>
<dbReference type="GO" id="GO:0000428">
    <property type="term" value="C:DNA-directed RNA polymerase complex"/>
    <property type="evidence" value="ECO:0007669"/>
    <property type="project" value="UniProtKB-KW"/>
</dbReference>
<dbReference type="GO" id="GO:0005739">
    <property type="term" value="C:mitochondrion"/>
    <property type="evidence" value="ECO:0007669"/>
    <property type="project" value="GOC"/>
</dbReference>
<dbReference type="GO" id="GO:0003677">
    <property type="term" value="F:DNA binding"/>
    <property type="evidence" value="ECO:0007669"/>
    <property type="project" value="UniProtKB-UniRule"/>
</dbReference>
<dbReference type="GO" id="GO:0003899">
    <property type="term" value="F:DNA-directed RNA polymerase activity"/>
    <property type="evidence" value="ECO:0007669"/>
    <property type="project" value="UniProtKB-UniRule"/>
</dbReference>
<dbReference type="GO" id="GO:0046983">
    <property type="term" value="F:protein dimerization activity"/>
    <property type="evidence" value="ECO:0007669"/>
    <property type="project" value="InterPro"/>
</dbReference>
<dbReference type="GO" id="GO:0006351">
    <property type="term" value="P:DNA-templated transcription"/>
    <property type="evidence" value="ECO:0007669"/>
    <property type="project" value="UniProtKB-UniRule"/>
</dbReference>
<dbReference type="CDD" id="cd06928">
    <property type="entry name" value="RNAP_alpha_NTD"/>
    <property type="match status" value="1"/>
</dbReference>
<dbReference type="FunFam" id="2.170.120.12:FF:000001">
    <property type="entry name" value="DNA-directed RNA polymerase subunit alpha"/>
    <property type="match status" value="1"/>
</dbReference>
<dbReference type="FunFam" id="3.30.1360.10:FF:000039">
    <property type="entry name" value="DNA-directed RNA polymerase subunit alpha"/>
    <property type="match status" value="1"/>
</dbReference>
<dbReference type="Gene3D" id="1.10.150.20">
    <property type="entry name" value="5' to 3' exonuclease, C-terminal subdomain"/>
    <property type="match status" value="1"/>
</dbReference>
<dbReference type="Gene3D" id="2.170.120.12">
    <property type="entry name" value="DNA-directed RNA polymerase, insert domain"/>
    <property type="match status" value="1"/>
</dbReference>
<dbReference type="Gene3D" id="3.30.1360.10">
    <property type="entry name" value="RNA polymerase, RBP11-like subunit"/>
    <property type="match status" value="1"/>
</dbReference>
<dbReference type="HAMAP" id="MF_00059">
    <property type="entry name" value="RNApol_bact_RpoA"/>
    <property type="match status" value="1"/>
</dbReference>
<dbReference type="InterPro" id="IPR011262">
    <property type="entry name" value="DNA-dir_RNA_pol_insert"/>
</dbReference>
<dbReference type="InterPro" id="IPR011263">
    <property type="entry name" value="DNA-dir_RNA_pol_RpoA/D/Rpb3"/>
</dbReference>
<dbReference type="InterPro" id="IPR011773">
    <property type="entry name" value="DNA-dir_RpoA"/>
</dbReference>
<dbReference type="InterPro" id="IPR036603">
    <property type="entry name" value="RBP11-like"/>
</dbReference>
<dbReference type="InterPro" id="IPR011260">
    <property type="entry name" value="RNAP_asu_C"/>
</dbReference>
<dbReference type="InterPro" id="IPR036643">
    <property type="entry name" value="RNApol_insert_sf"/>
</dbReference>
<dbReference type="NCBIfam" id="TIGR02027">
    <property type="entry name" value="rpoA"/>
    <property type="match status" value="1"/>
</dbReference>
<dbReference type="Pfam" id="PF01000">
    <property type="entry name" value="RNA_pol_A_bac"/>
    <property type="match status" value="1"/>
</dbReference>
<dbReference type="Pfam" id="PF03118">
    <property type="entry name" value="RNA_pol_A_CTD"/>
    <property type="match status" value="1"/>
</dbReference>
<dbReference type="Pfam" id="PF01193">
    <property type="entry name" value="RNA_pol_L"/>
    <property type="match status" value="1"/>
</dbReference>
<dbReference type="SMART" id="SM00662">
    <property type="entry name" value="RPOLD"/>
    <property type="match status" value="1"/>
</dbReference>
<dbReference type="SUPFAM" id="SSF47789">
    <property type="entry name" value="C-terminal domain of RNA polymerase alpha subunit"/>
    <property type="match status" value="1"/>
</dbReference>
<dbReference type="SUPFAM" id="SSF56553">
    <property type="entry name" value="Insert subdomain of RNA polymerase alpha subunit"/>
    <property type="match status" value="1"/>
</dbReference>
<dbReference type="SUPFAM" id="SSF55257">
    <property type="entry name" value="RBP11-like subunits of RNA polymerase"/>
    <property type="match status" value="1"/>
</dbReference>
<protein>
    <recommendedName>
        <fullName evidence="1">DNA-directed RNA polymerase subunit alpha</fullName>
        <shortName evidence="1">PEP</shortName>
        <ecNumber evidence="1">2.7.7.6</ecNumber>
    </recommendedName>
    <alternativeName>
        <fullName evidence="1">Plastid-encoded RNA polymerase subunit alpha</fullName>
        <shortName evidence="1">RNA polymerase subunit alpha</shortName>
    </alternativeName>
</protein>
<proteinExistence type="inferred from homology"/>
<name>RPOA_EUCGG</name>
<geneLocation type="chloroplast"/>
<organism>
    <name type="scientific">Eucalyptus globulus subsp. globulus</name>
    <name type="common">Tasmanian blue gum</name>
    <dbReference type="NCBI Taxonomy" id="71271"/>
    <lineage>
        <taxon>Eukaryota</taxon>
        <taxon>Viridiplantae</taxon>
        <taxon>Streptophyta</taxon>
        <taxon>Embryophyta</taxon>
        <taxon>Tracheophyta</taxon>
        <taxon>Spermatophyta</taxon>
        <taxon>Magnoliopsida</taxon>
        <taxon>eudicotyledons</taxon>
        <taxon>Gunneridae</taxon>
        <taxon>Pentapetalae</taxon>
        <taxon>rosids</taxon>
        <taxon>malvids</taxon>
        <taxon>Myrtales</taxon>
        <taxon>Myrtaceae</taxon>
        <taxon>Myrtoideae</taxon>
        <taxon>Eucalypteae</taxon>
        <taxon>Eucalyptus</taxon>
    </lineage>
</organism>
<evidence type="ECO:0000255" key="1">
    <source>
        <dbReference type="HAMAP-Rule" id="MF_00059"/>
    </source>
</evidence>
<keyword id="KW-0150">Chloroplast</keyword>
<keyword id="KW-0240">DNA-directed RNA polymerase</keyword>
<keyword id="KW-0548">Nucleotidyltransferase</keyword>
<keyword id="KW-0934">Plastid</keyword>
<keyword id="KW-0804">Transcription</keyword>
<keyword id="KW-0808">Transferase</keyword>
<feature type="chain" id="PRO_0000225921" description="DNA-directed RNA polymerase subunit alpha">
    <location>
        <begin position="1"/>
        <end position="337"/>
    </location>
</feature>
<feature type="region of interest" description="Alpha N-terminal domain (alpha-NTD)" evidence="1">
    <location>
        <begin position="1"/>
        <end position="233"/>
    </location>
</feature>
<feature type="region of interest" description="Alpha C-terminal domain (alpha-CTD)" evidence="1">
    <location>
        <begin position="267"/>
        <end position="337"/>
    </location>
</feature>
<accession>Q49KW6</accession>
<comment type="function">
    <text evidence="1">DNA-dependent RNA polymerase catalyzes the transcription of DNA into RNA using the four ribonucleoside triphosphates as substrates.</text>
</comment>
<comment type="catalytic activity">
    <reaction evidence="1">
        <text>RNA(n) + a ribonucleoside 5'-triphosphate = RNA(n+1) + diphosphate</text>
        <dbReference type="Rhea" id="RHEA:21248"/>
        <dbReference type="Rhea" id="RHEA-COMP:14527"/>
        <dbReference type="Rhea" id="RHEA-COMP:17342"/>
        <dbReference type="ChEBI" id="CHEBI:33019"/>
        <dbReference type="ChEBI" id="CHEBI:61557"/>
        <dbReference type="ChEBI" id="CHEBI:140395"/>
        <dbReference type="EC" id="2.7.7.6"/>
    </reaction>
</comment>
<comment type="subunit">
    <text evidence="1">In plastids the minimal PEP RNA polymerase catalytic core is composed of four subunits: alpha, beta, beta', and beta''. When a (nuclear-encoded) sigma factor is associated with the core the holoenzyme is formed, which can initiate transcription.</text>
</comment>
<comment type="subcellular location">
    <subcellularLocation>
        <location>Plastid</location>
        <location>Chloroplast</location>
    </subcellularLocation>
</comment>
<comment type="domain">
    <text evidence="1">The N-terminal domain is essential for RNAP assembly and basal transcription, whereas the C-terminal domain is involved in interaction with transcriptional regulators and with upstream promoter elements.</text>
</comment>
<comment type="similarity">
    <text evidence="1">Belongs to the RNA polymerase alpha chain family.</text>
</comment>
<gene>
    <name evidence="1" type="primary">rpoA</name>
</gene>